<feature type="propeptide" id="PRO_0000444529" evidence="5">
    <location>
        <begin position="1" status="less than"/>
        <end position="44"/>
    </location>
</feature>
<feature type="peptide" id="PRO_0000444530" description="Diuretic hormone 45" evidence="6">
    <location>
        <begin position="47"/>
        <end position="91"/>
    </location>
</feature>
<feature type="peptide" id="PRO_0000444531" description="Diuretic hormone 45 precursor-related peptide" evidence="3">
    <location>
        <begin position="95"/>
        <end position="107"/>
    </location>
</feature>
<feature type="modified residue" description="Valine amide" evidence="1">
    <location>
        <position position="91"/>
    </location>
</feature>
<feature type="non-terminal residue" evidence="5">
    <location>
        <position position="1"/>
    </location>
</feature>
<name>DIH45_AGRIP</name>
<comment type="function">
    <molecule>Diuretic hormone 45</molecule>
    <text evidence="2">Regulation of fluid secretion.</text>
</comment>
<comment type="subcellular location">
    <subcellularLocation>
        <location evidence="5">Secreted</location>
    </subcellularLocation>
</comment>
<comment type="tissue specificity">
    <text evidence="3">Expressed in corpora cardiaca (CC), corpora allata (CA), antennal lobe (AL) and gnathal ganglion (GNG) (at protein level). Expression in AL and GNG detected in some animals, in CC and CA in few animals (at protein level).</text>
</comment>
<comment type="mass spectrometry">
    <molecule>Diuretic hormone 45 precursor-related peptide</molecule>
</comment>
<protein>
    <recommendedName>
        <fullName evidence="4">Diuretic hormone 45</fullName>
    </recommendedName>
    <component>
        <recommendedName>
            <fullName evidence="4">Diuretic hormone 45 precursor-related peptide</fullName>
            <shortName evidence="4">DH(45)-PP</shortName>
            <shortName evidence="4">DH-45-PP</shortName>
        </recommendedName>
    </component>
</protein>
<accession>C0HKT5</accession>
<sequence>LYAMSPMAARYSAGAPWLYLLADMPRDSQRLVDPADLHEGRARPKRKMPSLSINNPMEVLRQRLILEVARKQMREANQRQAVANRLFLQNVGKRGFWANSAPTRYDN</sequence>
<evidence type="ECO:0000250" key="1">
    <source>
        <dbReference type="UniProtKB" id="P21819"/>
    </source>
</evidence>
<evidence type="ECO:0000250" key="2">
    <source>
        <dbReference type="UniProtKB" id="P67800"/>
    </source>
</evidence>
<evidence type="ECO:0000269" key="3">
    <source>
    </source>
</evidence>
<evidence type="ECO:0000303" key="4">
    <source>
    </source>
</evidence>
<evidence type="ECO:0000305" key="5"/>
<evidence type="ECO:0000305" key="6">
    <source>
    </source>
</evidence>
<reference evidence="5" key="1">
    <citation type="journal article" date="2018" name="J. Proteome Res.">
        <title>Mating-induced differential peptidomics of neuropeptides and protein hormones in Agrotis ipsilon moths.</title>
        <authorList>
            <person name="Diesner M."/>
            <person name="Gallot A."/>
            <person name="Binz H."/>
            <person name="Gaertner C."/>
            <person name="Vitecek S."/>
            <person name="Kahnt J."/>
            <person name="Schachtner J."/>
            <person name="Jacquin-Joly E."/>
            <person name="Gadenne C."/>
        </authorList>
    </citation>
    <scope>NUCLEOTIDE SEQUENCE [MRNA]</scope>
    <scope>PROTEIN SEQUENCE OF 95-107</scope>
    <scope>TISSUE SPECIFICITY</scope>
    <scope>MASS SPECTROMETRY</scope>
    <scope>IDENTIFICATION BY MASS SPECTROMETRY</scope>
</reference>
<organism>
    <name type="scientific">Agrotis ipsilon</name>
    <name type="common">Black cutworm moth</name>
    <dbReference type="NCBI Taxonomy" id="56364"/>
    <lineage>
        <taxon>Eukaryota</taxon>
        <taxon>Metazoa</taxon>
        <taxon>Ecdysozoa</taxon>
        <taxon>Arthropoda</taxon>
        <taxon>Hexapoda</taxon>
        <taxon>Insecta</taxon>
        <taxon>Pterygota</taxon>
        <taxon>Neoptera</taxon>
        <taxon>Endopterygota</taxon>
        <taxon>Lepidoptera</taxon>
        <taxon>Glossata</taxon>
        <taxon>Ditrysia</taxon>
        <taxon>Noctuoidea</taxon>
        <taxon>Noctuidae</taxon>
        <taxon>Noctuinae</taxon>
        <taxon>Noctuini</taxon>
        <taxon>Agrotis</taxon>
    </lineage>
</organism>
<keyword id="KW-0027">Amidation</keyword>
<keyword id="KW-0165">Cleavage on pair of basic residues</keyword>
<keyword id="KW-0903">Direct protein sequencing</keyword>
<keyword id="KW-0372">Hormone</keyword>
<keyword id="KW-0527">Neuropeptide</keyword>
<keyword id="KW-0964">Secreted</keyword>
<dbReference type="GO" id="GO:0005576">
    <property type="term" value="C:extracellular region"/>
    <property type="evidence" value="ECO:0007669"/>
    <property type="project" value="UniProtKB-SubCell"/>
</dbReference>
<dbReference type="GO" id="GO:0005179">
    <property type="term" value="F:hormone activity"/>
    <property type="evidence" value="ECO:0007669"/>
    <property type="project" value="UniProtKB-KW"/>
</dbReference>
<dbReference type="GO" id="GO:0007218">
    <property type="term" value="P:neuropeptide signaling pathway"/>
    <property type="evidence" value="ECO:0007669"/>
    <property type="project" value="UniProtKB-KW"/>
</dbReference>
<dbReference type="InterPro" id="IPR018446">
    <property type="entry name" value="Corticotropin-releasing_fac_CS"/>
</dbReference>
<dbReference type="InterPro" id="IPR000187">
    <property type="entry name" value="CRF"/>
</dbReference>
<dbReference type="Pfam" id="PF00473">
    <property type="entry name" value="CRF"/>
    <property type="match status" value="1"/>
</dbReference>
<dbReference type="SMART" id="SM00039">
    <property type="entry name" value="CRF"/>
    <property type="match status" value="1"/>
</dbReference>
<dbReference type="PROSITE" id="PS00511">
    <property type="entry name" value="CRF"/>
    <property type="match status" value="1"/>
</dbReference>
<proteinExistence type="evidence at protein level"/>